<name>MIOC_PASMU</name>
<organism>
    <name type="scientific">Pasteurella multocida (strain Pm70)</name>
    <dbReference type="NCBI Taxonomy" id="272843"/>
    <lineage>
        <taxon>Bacteria</taxon>
        <taxon>Pseudomonadati</taxon>
        <taxon>Pseudomonadota</taxon>
        <taxon>Gammaproteobacteria</taxon>
        <taxon>Pasteurellales</taxon>
        <taxon>Pasteurellaceae</taxon>
        <taxon>Pasteurella</taxon>
    </lineage>
</organism>
<protein>
    <recommendedName>
        <fullName>Protein MioC homolog</fullName>
    </recommendedName>
</protein>
<dbReference type="EMBL" id="AF237937">
    <property type="protein sequence ID" value="AAF68423.1"/>
    <property type="molecule type" value="Genomic_DNA"/>
</dbReference>
<dbReference type="EMBL" id="AE004439">
    <property type="protein sequence ID" value="AAK03568.1"/>
    <property type="molecule type" value="Genomic_DNA"/>
</dbReference>
<dbReference type="RefSeq" id="WP_005755058.1">
    <property type="nucleotide sequence ID" value="NC_002663.1"/>
</dbReference>
<dbReference type="SMR" id="Q9L6A2"/>
<dbReference type="STRING" id="272843.PM1484"/>
<dbReference type="EnsemblBacteria" id="AAK03568">
    <property type="protein sequence ID" value="AAK03568"/>
    <property type="gene ID" value="PM1484"/>
</dbReference>
<dbReference type="GeneID" id="77206956"/>
<dbReference type="KEGG" id="pmu:PM1484"/>
<dbReference type="HOGENOM" id="CLU_051402_4_1_6"/>
<dbReference type="OrthoDB" id="359268at2"/>
<dbReference type="Proteomes" id="UP000000809">
    <property type="component" value="Chromosome"/>
</dbReference>
<dbReference type="GO" id="GO:0005829">
    <property type="term" value="C:cytosol"/>
    <property type="evidence" value="ECO:0007669"/>
    <property type="project" value="TreeGrafter"/>
</dbReference>
<dbReference type="GO" id="GO:0050660">
    <property type="term" value="F:flavin adenine dinucleotide binding"/>
    <property type="evidence" value="ECO:0007669"/>
    <property type="project" value="TreeGrafter"/>
</dbReference>
<dbReference type="GO" id="GO:0010181">
    <property type="term" value="F:FMN binding"/>
    <property type="evidence" value="ECO:0007669"/>
    <property type="project" value="InterPro"/>
</dbReference>
<dbReference type="GO" id="GO:0016491">
    <property type="term" value="F:oxidoreductase activity"/>
    <property type="evidence" value="ECO:0007669"/>
    <property type="project" value="TreeGrafter"/>
</dbReference>
<dbReference type="Gene3D" id="3.40.50.360">
    <property type="match status" value="1"/>
</dbReference>
<dbReference type="InterPro" id="IPR001094">
    <property type="entry name" value="Flavdoxin-like"/>
</dbReference>
<dbReference type="InterPro" id="IPR008254">
    <property type="entry name" value="Flavodoxin/NO_synth"/>
</dbReference>
<dbReference type="InterPro" id="IPR029039">
    <property type="entry name" value="Flavoprotein-like_sf"/>
</dbReference>
<dbReference type="NCBIfam" id="NF006531">
    <property type="entry name" value="PRK09004.1"/>
    <property type="match status" value="1"/>
</dbReference>
<dbReference type="PANTHER" id="PTHR19384:SF128">
    <property type="entry name" value="NADPH OXIDOREDUCTASE A"/>
    <property type="match status" value="1"/>
</dbReference>
<dbReference type="PANTHER" id="PTHR19384">
    <property type="entry name" value="NITRIC OXIDE SYNTHASE-RELATED"/>
    <property type="match status" value="1"/>
</dbReference>
<dbReference type="Pfam" id="PF00258">
    <property type="entry name" value="Flavodoxin_1"/>
    <property type="match status" value="1"/>
</dbReference>
<dbReference type="PRINTS" id="PR00369">
    <property type="entry name" value="FLAVODOXIN"/>
</dbReference>
<dbReference type="SUPFAM" id="SSF52218">
    <property type="entry name" value="Flavoproteins"/>
    <property type="match status" value="1"/>
</dbReference>
<dbReference type="PROSITE" id="PS50902">
    <property type="entry name" value="FLAVODOXIN_LIKE"/>
    <property type="match status" value="1"/>
</dbReference>
<accession>Q9L6A2</accession>
<feature type="chain" id="PRO_0000196575" description="Protein MioC homolog">
    <location>
        <begin position="1"/>
        <end position="147"/>
    </location>
</feature>
<feature type="domain" description="Flavodoxin-like" evidence="2">
    <location>
        <begin position="5"/>
        <end position="144"/>
    </location>
</feature>
<keyword id="KW-0249">Electron transport</keyword>
<keyword id="KW-0285">Flavoprotein</keyword>
<keyword id="KW-0288">FMN</keyword>
<keyword id="KW-1185">Reference proteome</keyword>
<keyword id="KW-0813">Transport</keyword>
<comment type="function">
    <text evidence="1">Probable electron transporter required for biotin synthase activity.</text>
</comment>
<comment type="cofactor">
    <cofactor evidence="1">
        <name>FMN</name>
        <dbReference type="ChEBI" id="CHEBI:58210"/>
    </cofactor>
</comment>
<comment type="similarity">
    <text evidence="3">Belongs to the flavodoxin family. MioC subfamily.</text>
</comment>
<gene>
    <name type="primary">mioC</name>
    <name type="ordered locus">PM1484</name>
</gene>
<proteinExistence type="inferred from homology"/>
<reference key="1">
    <citation type="journal article" date="2000" name="Microb. Pathog.">
        <title>Identification of Pasteurella multocida virulence genes in a septicemic mouse model using signature-tagged mutagenesis.</title>
        <authorList>
            <person name="Fuller T.E."/>
            <person name="Kennedy M.J."/>
            <person name="Lowery D.E."/>
        </authorList>
    </citation>
    <scope>NUCLEOTIDE SEQUENCE [GENOMIC DNA]</scope>
</reference>
<reference key="2">
    <citation type="journal article" date="2001" name="Proc. Natl. Acad. Sci. U.S.A.">
        <title>Complete genomic sequence of Pasteurella multocida Pm70.</title>
        <authorList>
            <person name="May B.J."/>
            <person name="Zhang Q."/>
            <person name="Li L.L."/>
            <person name="Paustian M.L."/>
            <person name="Whittam T.S."/>
            <person name="Kapur V."/>
        </authorList>
    </citation>
    <scope>NUCLEOTIDE SEQUENCE [LARGE SCALE GENOMIC DNA]</scope>
    <source>
        <strain>Pm70</strain>
    </source>
</reference>
<evidence type="ECO:0000250" key="1"/>
<evidence type="ECO:0000255" key="2">
    <source>
        <dbReference type="PROSITE-ProRule" id="PRU00088"/>
    </source>
</evidence>
<evidence type="ECO:0000305" key="3"/>
<sequence>MKTKICIITGSTLGGAEYVAEHIAEILEQQDYPVRLEHGPNFEEVIDEKCWLVVTSTHGAGELPDNIKPLFEKLAFHPKQLADLRFAVIGLGNSDYDTFCHAVDHVEQLLLSKDALQLCESLRMDMLTITDPEHTAEQWLPQFLSQL</sequence>